<accession>A6QI23</accession>
<protein>
    <recommendedName>
        <fullName evidence="1">Foldase protein PrsA</fullName>
        <ecNumber evidence="1">5.2.1.8</ecNumber>
    </recommendedName>
</protein>
<proteinExistence type="inferred from homology"/>
<feature type="signal peptide" evidence="1">
    <location>
        <begin position="1"/>
        <end position="20"/>
    </location>
</feature>
<feature type="chain" id="PRO_1000085059" description="Foldase protein PrsA">
    <location>
        <begin position="21"/>
        <end position="320"/>
    </location>
</feature>
<feature type="domain" description="PpiC" evidence="1">
    <location>
        <begin position="139"/>
        <end position="245"/>
    </location>
</feature>
<feature type="region of interest" description="Disordered" evidence="2">
    <location>
        <begin position="159"/>
        <end position="198"/>
    </location>
</feature>
<feature type="lipid moiety-binding region" description="N-palmitoyl cysteine" evidence="1">
    <location>
        <position position="21"/>
    </location>
</feature>
<feature type="lipid moiety-binding region" description="S-diacylglycerol cysteine" evidence="1">
    <location>
        <position position="21"/>
    </location>
</feature>
<comment type="function">
    <text evidence="1">Plays a major role in protein secretion by helping the post-translocational extracellular folding of several secreted proteins.</text>
</comment>
<comment type="catalytic activity">
    <reaction evidence="1">
        <text>[protein]-peptidylproline (omega=180) = [protein]-peptidylproline (omega=0)</text>
        <dbReference type="Rhea" id="RHEA:16237"/>
        <dbReference type="Rhea" id="RHEA-COMP:10747"/>
        <dbReference type="Rhea" id="RHEA-COMP:10748"/>
        <dbReference type="ChEBI" id="CHEBI:83833"/>
        <dbReference type="ChEBI" id="CHEBI:83834"/>
        <dbReference type="EC" id="5.2.1.8"/>
    </reaction>
</comment>
<comment type="subcellular location">
    <subcellularLocation>
        <location evidence="1">Cell membrane</location>
        <topology evidence="1">Lipid-anchor</topology>
    </subcellularLocation>
</comment>
<comment type="similarity">
    <text evidence="1">Belongs to the PrsA family.</text>
</comment>
<keyword id="KW-1003">Cell membrane</keyword>
<keyword id="KW-0413">Isomerase</keyword>
<keyword id="KW-0449">Lipoprotein</keyword>
<keyword id="KW-0472">Membrane</keyword>
<keyword id="KW-0564">Palmitate</keyword>
<keyword id="KW-0697">Rotamase</keyword>
<keyword id="KW-0732">Signal</keyword>
<reference key="1">
    <citation type="journal article" date="2008" name="J. Bacteriol.">
        <title>Genome sequence of Staphylococcus aureus strain Newman and comparative analysis of staphylococcal genomes: polymorphism and evolution of two major pathogenicity islands.</title>
        <authorList>
            <person name="Baba T."/>
            <person name="Bae T."/>
            <person name="Schneewind O."/>
            <person name="Takeuchi F."/>
            <person name="Hiramatsu K."/>
        </authorList>
    </citation>
    <scope>NUCLEOTIDE SEQUENCE [LARGE SCALE GENOMIC DNA]</scope>
    <source>
        <strain>Newman</strain>
    </source>
</reference>
<gene>
    <name evidence="1" type="primary">prsA</name>
    <name type="ordered locus">NWMN_1733</name>
</gene>
<organism>
    <name type="scientific">Staphylococcus aureus (strain Newman)</name>
    <dbReference type="NCBI Taxonomy" id="426430"/>
    <lineage>
        <taxon>Bacteria</taxon>
        <taxon>Bacillati</taxon>
        <taxon>Bacillota</taxon>
        <taxon>Bacilli</taxon>
        <taxon>Bacillales</taxon>
        <taxon>Staphylococcaceae</taxon>
        <taxon>Staphylococcus</taxon>
    </lineage>
</organism>
<evidence type="ECO:0000255" key="1">
    <source>
        <dbReference type="HAMAP-Rule" id="MF_01145"/>
    </source>
</evidence>
<evidence type="ECO:0000256" key="2">
    <source>
        <dbReference type="SAM" id="MobiDB-lite"/>
    </source>
</evidence>
<dbReference type="EC" id="5.2.1.8" evidence="1"/>
<dbReference type="EMBL" id="AP009351">
    <property type="protein sequence ID" value="BAF68005.1"/>
    <property type="molecule type" value="Genomic_DNA"/>
</dbReference>
<dbReference type="RefSeq" id="WP_000782121.1">
    <property type="nucleotide sequence ID" value="NZ_JBBIAE010000013.1"/>
</dbReference>
<dbReference type="BMRB" id="A6QI23"/>
<dbReference type="SMR" id="A6QI23"/>
<dbReference type="KEGG" id="sae:NWMN_1733"/>
<dbReference type="HOGENOM" id="CLU_034646_6_2_9"/>
<dbReference type="Proteomes" id="UP000006386">
    <property type="component" value="Chromosome"/>
</dbReference>
<dbReference type="GO" id="GO:0005886">
    <property type="term" value="C:plasma membrane"/>
    <property type="evidence" value="ECO:0007669"/>
    <property type="project" value="UniProtKB-SubCell"/>
</dbReference>
<dbReference type="GO" id="GO:0003755">
    <property type="term" value="F:peptidyl-prolyl cis-trans isomerase activity"/>
    <property type="evidence" value="ECO:0007669"/>
    <property type="project" value="UniProtKB-UniRule"/>
</dbReference>
<dbReference type="GO" id="GO:0006457">
    <property type="term" value="P:protein folding"/>
    <property type="evidence" value="ECO:0007669"/>
    <property type="project" value="UniProtKB-UniRule"/>
</dbReference>
<dbReference type="Gene3D" id="3.10.50.40">
    <property type="match status" value="1"/>
</dbReference>
<dbReference type="Gene3D" id="1.10.4030.10">
    <property type="entry name" value="Porin chaperone SurA, peptide-binding domain"/>
    <property type="match status" value="1"/>
</dbReference>
<dbReference type="HAMAP" id="MF_01145">
    <property type="entry name" value="Foldase_PrsA"/>
    <property type="match status" value="1"/>
</dbReference>
<dbReference type="InterPro" id="IPR023059">
    <property type="entry name" value="Foldase_PrsA"/>
</dbReference>
<dbReference type="InterPro" id="IPR046357">
    <property type="entry name" value="PPIase_dom_sf"/>
</dbReference>
<dbReference type="InterPro" id="IPR000297">
    <property type="entry name" value="PPIase_PpiC"/>
</dbReference>
<dbReference type="InterPro" id="IPR050245">
    <property type="entry name" value="PrsA_foldase"/>
</dbReference>
<dbReference type="InterPro" id="IPR027304">
    <property type="entry name" value="Trigger_fact/SurA_dom_sf"/>
</dbReference>
<dbReference type="PANTHER" id="PTHR47245:SF1">
    <property type="entry name" value="FOLDASE PROTEIN PRSA"/>
    <property type="match status" value="1"/>
</dbReference>
<dbReference type="PANTHER" id="PTHR47245">
    <property type="entry name" value="PEPTIDYLPROLYL ISOMERASE"/>
    <property type="match status" value="1"/>
</dbReference>
<dbReference type="Pfam" id="PF00639">
    <property type="entry name" value="Rotamase"/>
    <property type="match status" value="1"/>
</dbReference>
<dbReference type="SUPFAM" id="SSF54534">
    <property type="entry name" value="FKBP-like"/>
    <property type="match status" value="1"/>
</dbReference>
<dbReference type="SUPFAM" id="SSF109998">
    <property type="entry name" value="Triger factor/SurA peptide-binding domain-like"/>
    <property type="match status" value="1"/>
</dbReference>
<dbReference type="PROSITE" id="PS50198">
    <property type="entry name" value="PPIC_PPIASE_2"/>
    <property type="match status" value="1"/>
</dbReference>
<dbReference type="PROSITE" id="PS51257">
    <property type="entry name" value="PROKAR_LIPOPROTEIN"/>
    <property type="match status" value="1"/>
</dbReference>
<name>PRSA_STAAE</name>
<sequence length="320" mass="35638">MKMINKLIVPVTASALLLGACGASATDSKENTLISSKAGDVTVADTMKKIGKDQIANASFTEMLNKILADKYKNKVNDKKIDEQIEKMQKQYGGKDKFEKALQQQGLTADKYKENLRTAAYHKELLSDKIKISDSEIKEDSKKASHILIKVKSKKSDKEGLDDKEAKQKAEEIQKEVSKDPSKFGEIAKKESMDTGSAKKDGELGYVLKGQTDKDFEKALFKLKDGEVSEVVKSSFGYHIIKADKPTDFNSEKQSLKEKLVDQKVQKNPKLLTDAYKDLLKEYDVDFKDRDIKSVVEDKILNPEKLKQGGAQGGQSGMSQ</sequence>